<gene>
    <name type="ORF">A ORF O</name>
</gene>
<proteinExistence type="predicted"/>
<feature type="chain" id="PRO_0000099658" description="Uncharacterized 9.5 kDa protein">
    <location>
        <begin position="1"/>
        <end position="83"/>
    </location>
</feature>
<sequence>MLIFILSILPYNICSLIGTELYDCIFLYTKSNGCSRLQTCIKVSCSMLEFMYLAEDIPIQFDGIGNCLLSMVIMEYHLLFANI</sequence>
<keyword id="KW-1185">Reference proteome</keyword>
<protein>
    <recommendedName>
        <fullName>Uncharacterized 9.5 kDa protein</fullName>
    </recommendedName>
</protein>
<name>YVAO_VACCC</name>
<organism>
    <name type="scientific">Vaccinia virus (strain Copenhagen)</name>
    <name type="common">VACV</name>
    <dbReference type="NCBI Taxonomy" id="10249"/>
    <lineage>
        <taxon>Viruses</taxon>
        <taxon>Varidnaviria</taxon>
        <taxon>Bamfordvirae</taxon>
        <taxon>Nucleocytoviricota</taxon>
        <taxon>Pokkesviricetes</taxon>
        <taxon>Chitovirales</taxon>
        <taxon>Poxviridae</taxon>
        <taxon>Chordopoxvirinae</taxon>
        <taxon>Orthopoxvirus</taxon>
        <taxon>Vaccinia virus</taxon>
    </lineage>
</organism>
<accession>P20524</accession>
<dbReference type="EMBL" id="M35027">
    <property type="protein sequence ID" value="AAA48167.1"/>
    <property type="molecule type" value="Genomic_DNA"/>
</dbReference>
<dbReference type="PIR" id="B42525">
    <property type="entry name" value="B42525"/>
</dbReference>
<dbReference type="Proteomes" id="UP000008269">
    <property type="component" value="Segment"/>
</dbReference>
<organismHost>
    <name type="scientific">Homo sapiens</name>
    <name type="common">Human</name>
    <dbReference type="NCBI Taxonomy" id="9606"/>
</organismHost>
<reference key="1">
    <citation type="journal article" date="1990" name="Virology">
        <title>The complete DNA sequence of vaccinia virus.</title>
        <authorList>
            <person name="Goebel S.J."/>
            <person name="Johnson G.P."/>
            <person name="Perkus M.E."/>
            <person name="Davis S.W."/>
            <person name="Winslow J.P."/>
            <person name="Paoletti E."/>
        </authorList>
    </citation>
    <scope>NUCLEOTIDE SEQUENCE [LARGE SCALE GENOMIC DNA]</scope>
</reference>
<reference key="2">
    <citation type="journal article" date="1990" name="Virology">
        <title>Appendix to 'The complete DNA sequence of vaccinia virus'.</title>
        <authorList>
            <person name="Goebel S.J."/>
            <person name="Johnson G.P."/>
            <person name="Perkus M.E."/>
            <person name="Davis S.W."/>
            <person name="Winslow J.P."/>
            <person name="Paoletti E."/>
        </authorList>
    </citation>
    <scope>COMPLETE GENOME</scope>
</reference>